<evidence type="ECO:0000255" key="1">
    <source>
        <dbReference type="HAMAP-Rule" id="MF_00300"/>
    </source>
</evidence>
<evidence type="ECO:0000256" key="2">
    <source>
        <dbReference type="SAM" id="MobiDB-lite"/>
    </source>
</evidence>
<dbReference type="EC" id="4.2.3.5" evidence="1"/>
<dbReference type="EMBL" id="CP000681">
    <property type="protein sequence ID" value="ABP76172.1"/>
    <property type="molecule type" value="Genomic_DNA"/>
</dbReference>
<dbReference type="SMR" id="A4Y889"/>
<dbReference type="STRING" id="319224.Sputcn32_2451"/>
<dbReference type="KEGG" id="spc:Sputcn32_2451"/>
<dbReference type="eggNOG" id="COG0082">
    <property type="taxonomic scope" value="Bacteria"/>
</dbReference>
<dbReference type="HOGENOM" id="CLU_034547_0_2_6"/>
<dbReference type="UniPathway" id="UPA00053">
    <property type="reaction ID" value="UER00090"/>
</dbReference>
<dbReference type="GO" id="GO:0005829">
    <property type="term" value="C:cytosol"/>
    <property type="evidence" value="ECO:0007669"/>
    <property type="project" value="TreeGrafter"/>
</dbReference>
<dbReference type="GO" id="GO:0004107">
    <property type="term" value="F:chorismate synthase activity"/>
    <property type="evidence" value="ECO:0007669"/>
    <property type="project" value="UniProtKB-UniRule"/>
</dbReference>
<dbReference type="GO" id="GO:0010181">
    <property type="term" value="F:FMN binding"/>
    <property type="evidence" value="ECO:0007669"/>
    <property type="project" value="TreeGrafter"/>
</dbReference>
<dbReference type="GO" id="GO:0008652">
    <property type="term" value="P:amino acid biosynthetic process"/>
    <property type="evidence" value="ECO:0007669"/>
    <property type="project" value="UniProtKB-KW"/>
</dbReference>
<dbReference type="GO" id="GO:0009073">
    <property type="term" value="P:aromatic amino acid family biosynthetic process"/>
    <property type="evidence" value="ECO:0007669"/>
    <property type="project" value="UniProtKB-KW"/>
</dbReference>
<dbReference type="GO" id="GO:0009423">
    <property type="term" value="P:chorismate biosynthetic process"/>
    <property type="evidence" value="ECO:0007669"/>
    <property type="project" value="UniProtKB-UniRule"/>
</dbReference>
<dbReference type="CDD" id="cd07304">
    <property type="entry name" value="Chorismate_synthase"/>
    <property type="match status" value="1"/>
</dbReference>
<dbReference type="FunFam" id="3.60.150.10:FF:000001">
    <property type="entry name" value="Chorismate synthase"/>
    <property type="match status" value="1"/>
</dbReference>
<dbReference type="Gene3D" id="3.60.150.10">
    <property type="entry name" value="Chorismate synthase AroC"/>
    <property type="match status" value="1"/>
</dbReference>
<dbReference type="HAMAP" id="MF_00300">
    <property type="entry name" value="Chorismate_synth"/>
    <property type="match status" value="1"/>
</dbReference>
<dbReference type="InterPro" id="IPR000453">
    <property type="entry name" value="Chorismate_synth"/>
</dbReference>
<dbReference type="InterPro" id="IPR035904">
    <property type="entry name" value="Chorismate_synth_AroC_sf"/>
</dbReference>
<dbReference type="InterPro" id="IPR020541">
    <property type="entry name" value="Chorismate_synthase_CS"/>
</dbReference>
<dbReference type="NCBIfam" id="TIGR00033">
    <property type="entry name" value="aroC"/>
    <property type="match status" value="1"/>
</dbReference>
<dbReference type="NCBIfam" id="NF003793">
    <property type="entry name" value="PRK05382.1"/>
    <property type="match status" value="1"/>
</dbReference>
<dbReference type="PANTHER" id="PTHR21085">
    <property type="entry name" value="CHORISMATE SYNTHASE"/>
    <property type="match status" value="1"/>
</dbReference>
<dbReference type="PANTHER" id="PTHR21085:SF0">
    <property type="entry name" value="CHORISMATE SYNTHASE"/>
    <property type="match status" value="1"/>
</dbReference>
<dbReference type="Pfam" id="PF01264">
    <property type="entry name" value="Chorismate_synt"/>
    <property type="match status" value="1"/>
</dbReference>
<dbReference type="PIRSF" id="PIRSF001456">
    <property type="entry name" value="Chorismate_synth"/>
    <property type="match status" value="1"/>
</dbReference>
<dbReference type="SUPFAM" id="SSF103263">
    <property type="entry name" value="Chorismate synthase, AroC"/>
    <property type="match status" value="1"/>
</dbReference>
<dbReference type="PROSITE" id="PS00787">
    <property type="entry name" value="CHORISMATE_SYNTHASE_1"/>
    <property type="match status" value="1"/>
</dbReference>
<dbReference type="PROSITE" id="PS00788">
    <property type="entry name" value="CHORISMATE_SYNTHASE_2"/>
    <property type="match status" value="1"/>
</dbReference>
<dbReference type="PROSITE" id="PS00789">
    <property type="entry name" value="CHORISMATE_SYNTHASE_3"/>
    <property type="match status" value="1"/>
</dbReference>
<sequence>MSGNSIGQNFVVTTFGESHGVALGCIIDGCPPGLELTEADMQHDLDRRRPGTSRYTTARREPDEVRILSGVFEGKTTGTSIGLLIENTDQRSQDYSNIKDLFRPGHADYTYQQKYGMRDYRGGGRSSARETAMRVAAGAVAKKYLKQVHCIEIYGFMSQLGPICAETIDLDQIEQNAFFFPDASKLEALDEYMRELKKSGDSIGAKISVIATGVPVGLGEPVFDRLDADIAHALMGINAVKGVEIGDGFGVVTQKGSEGRDLMSPQGFESNHAGGVLGGISSGQPIIAHIALKPTSSISVPGQSMTAQGEMAEVVTKGRHDPCVGIRAVPIAEAMLAIVLMDHLLRHRAQNQDVRSLTPVLGMR</sequence>
<reference key="1">
    <citation type="submission" date="2007-04" db="EMBL/GenBank/DDBJ databases">
        <title>Complete sequence of Shewanella putrefaciens CN-32.</title>
        <authorList>
            <consortium name="US DOE Joint Genome Institute"/>
            <person name="Copeland A."/>
            <person name="Lucas S."/>
            <person name="Lapidus A."/>
            <person name="Barry K."/>
            <person name="Detter J.C."/>
            <person name="Glavina del Rio T."/>
            <person name="Hammon N."/>
            <person name="Israni S."/>
            <person name="Dalin E."/>
            <person name="Tice H."/>
            <person name="Pitluck S."/>
            <person name="Chain P."/>
            <person name="Malfatti S."/>
            <person name="Shin M."/>
            <person name="Vergez L."/>
            <person name="Schmutz J."/>
            <person name="Larimer F."/>
            <person name="Land M."/>
            <person name="Hauser L."/>
            <person name="Kyrpides N."/>
            <person name="Mikhailova N."/>
            <person name="Romine M.F."/>
            <person name="Fredrickson J."/>
            <person name="Tiedje J."/>
            <person name="Richardson P."/>
        </authorList>
    </citation>
    <scope>NUCLEOTIDE SEQUENCE [LARGE SCALE GENOMIC DNA]</scope>
    <source>
        <strain>CN-32 / ATCC BAA-453</strain>
    </source>
</reference>
<name>AROC_SHEPC</name>
<gene>
    <name evidence="1" type="primary">aroC</name>
    <name type="ordered locus">Sputcn32_2451</name>
</gene>
<organism>
    <name type="scientific">Shewanella putrefaciens (strain CN-32 / ATCC BAA-453)</name>
    <dbReference type="NCBI Taxonomy" id="319224"/>
    <lineage>
        <taxon>Bacteria</taxon>
        <taxon>Pseudomonadati</taxon>
        <taxon>Pseudomonadota</taxon>
        <taxon>Gammaproteobacteria</taxon>
        <taxon>Alteromonadales</taxon>
        <taxon>Shewanellaceae</taxon>
        <taxon>Shewanella</taxon>
    </lineage>
</organism>
<keyword id="KW-0028">Amino-acid biosynthesis</keyword>
<keyword id="KW-0057">Aromatic amino acid biosynthesis</keyword>
<keyword id="KW-0274">FAD</keyword>
<keyword id="KW-0285">Flavoprotein</keyword>
<keyword id="KW-0288">FMN</keyword>
<keyword id="KW-0456">Lyase</keyword>
<keyword id="KW-0521">NADP</keyword>
<feature type="chain" id="PRO_1000022550" description="Chorismate synthase">
    <location>
        <begin position="1"/>
        <end position="364"/>
    </location>
</feature>
<feature type="region of interest" description="Disordered" evidence="2">
    <location>
        <begin position="41"/>
        <end position="60"/>
    </location>
</feature>
<feature type="binding site" evidence="1">
    <location>
        <position position="48"/>
    </location>
    <ligand>
        <name>NADP(+)</name>
        <dbReference type="ChEBI" id="CHEBI:58349"/>
    </ligand>
</feature>
<feature type="binding site" evidence="1">
    <location>
        <position position="54"/>
    </location>
    <ligand>
        <name>NADP(+)</name>
        <dbReference type="ChEBI" id="CHEBI:58349"/>
    </ligand>
</feature>
<feature type="binding site" evidence="1">
    <location>
        <begin position="125"/>
        <end position="127"/>
    </location>
    <ligand>
        <name>FMN</name>
        <dbReference type="ChEBI" id="CHEBI:58210"/>
    </ligand>
</feature>
<feature type="binding site" evidence="1">
    <location>
        <begin position="238"/>
        <end position="239"/>
    </location>
    <ligand>
        <name>FMN</name>
        <dbReference type="ChEBI" id="CHEBI:58210"/>
    </ligand>
</feature>
<feature type="binding site" evidence="1">
    <location>
        <position position="278"/>
    </location>
    <ligand>
        <name>FMN</name>
        <dbReference type="ChEBI" id="CHEBI:58210"/>
    </ligand>
</feature>
<feature type="binding site" evidence="1">
    <location>
        <begin position="293"/>
        <end position="297"/>
    </location>
    <ligand>
        <name>FMN</name>
        <dbReference type="ChEBI" id="CHEBI:58210"/>
    </ligand>
</feature>
<feature type="binding site" evidence="1">
    <location>
        <position position="319"/>
    </location>
    <ligand>
        <name>FMN</name>
        <dbReference type="ChEBI" id="CHEBI:58210"/>
    </ligand>
</feature>
<accession>A4Y889</accession>
<comment type="function">
    <text evidence="1">Catalyzes the anti-1,4-elimination of the C-3 phosphate and the C-6 proR hydrogen from 5-enolpyruvylshikimate-3-phosphate (EPSP) to yield chorismate, which is the branch point compound that serves as the starting substrate for the three terminal pathways of aromatic amino acid biosynthesis. This reaction introduces a second double bond into the aromatic ring system.</text>
</comment>
<comment type="catalytic activity">
    <reaction evidence="1">
        <text>5-O-(1-carboxyvinyl)-3-phosphoshikimate = chorismate + phosphate</text>
        <dbReference type="Rhea" id="RHEA:21020"/>
        <dbReference type="ChEBI" id="CHEBI:29748"/>
        <dbReference type="ChEBI" id="CHEBI:43474"/>
        <dbReference type="ChEBI" id="CHEBI:57701"/>
        <dbReference type="EC" id="4.2.3.5"/>
    </reaction>
</comment>
<comment type="cofactor">
    <cofactor evidence="1">
        <name>FMNH2</name>
        <dbReference type="ChEBI" id="CHEBI:57618"/>
    </cofactor>
    <text evidence="1">Reduced FMN (FMNH(2)).</text>
</comment>
<comment type="pathway">
    <text evidence="1">Metabolic intermediate biosynthesis; chorismate biosynthesis; chorismate from D-erythrose 4-phosphate and phosphoenolpyruvate: step 7/7.</text>
</comment>
<comment type="subunit">
    <text evidence="1">Homotetramer.</text>
</comment>
<comment type="similarity">
    <text evidence="1">Belongs to the chorismate synthase family.</text>
</comment>
<proteinExistence type="inferred from homology"/>
<protein>
    <recommendedName>
        <fullName evidence="1">Chorismate synthase</fullName>
        <shortName evidence="1">CS</shortName>
        <ecNumber evidence="1">4.2.3.5</ecNumber>
    </recommendedName>
    <alternativeName>
        <fullName evidence="1">5-enolpyruvylshikimate-3-phosphate phospholyase</fullName>
    </alternativeName>
</protein>